<organism>
    <name type="scientific">Enterobacter sp. (strain 638)</name>
    <dbReference type="NCBI Taxonomy" id="399742"/>
    <lineage>
        <taxon>Bacteria</taxon>
        <taxon>Pseudomonadati</taxon>
        <taxon>Pseudomonadota</taxon>
        <taxon>Gammaproteobacteria</taxon>
        <taxon>Enterobacterales</taxon>
        <taxon>Enterobacteriaceae</taxon>
        <taxon>Enterobacter</taxon>
    </lineage>
</organism>
<evidence type="ECO:0000255" key="1">
    <source>
        <dbReference type="HAMAP-Rule" id="MF_00382"/>
    </source>
</evidence>
<evidence type="ECO:0000305" key="2"/>
<reference key="1">
    <citation type="journal article" date="2010" name="PLoS Genet.">
        <title>Genome sequence of the plant growth promoting endophytic bacterium Enterobacter sp. 638.</title>
        <authorList>
            <person name="Taghavi S."/>
            <person name="van der Lelie D."/>
            <person name="Hoffman A."/>
            <person name="Zhang Y.B."/>
            <person name="Walla M.D."/>
            <person name="Vangronsveld J."/>
            <person name="Newman L."/>
            <person name="Monchy S."/>
        </authorList>
    </citation>
    <scope>NUCLEOTIDE SEQUENCE [LARGE SCALE GENOMIC DNA]</scope>
    <source>
        <strain>638</strain>
    </source>
</reference>
<proteinExistence type="inferred from homology"/>
<name>RL20_ENT38</name>
<dbReference type="EMBL" id="CP000653">
    <property type="protein sequence ID" value="ABP60406.1"/>
    <property type="molecule type" value="Genomic_DNA"/>
</dbReference>
<dbReference type="RefSeq" id="WP_012017122.1">
    <property type="nucleotide sequence ID" value="NC_009436.1"/>
</dbReference>
<dbReference type="SMR" id="A4W9M6"/>
<dbReference type="STRING" id="399742.Ent638_1727"/>
<dbReference type="GeneID" id="97601349"/>
<dbReference type="KEGG" id="ent:Ent638_1727"/>
<dbReference type="eggNOG" id="COG0292">
    <property type="taxonomic scope" value="Bacteria"/>
</dbReference>
<dbReference type="HOGENOM" id="CLU_123265_0_1_6"/>
<dbReference type="OrthoDB" id="9808966at2"/>
<dbReference type="Proteomes" id="UP000000230">
    <property type="component" value="Chromosome"/>
</dbReference>
<dbReference type="GO" id="GO:1990904">
    <property type="term" value="C:ribonucleoprotein complex"/>
    <property type="evidence" value="ECO:0007669"/>
    <property type="project" value="UniProtKB-KW"/>
</dbReference>
<dbReference type="GO" id="GO:0005840">
    <property type="term" value="C:ribosome"/>
    <property type="evidence" value="ECO:0007669"/>
    <property type="project" value="UniProtKB-KW"/>
</dbReference>
<dbReference type="GO" id="GO:0019843">
    <property type="term" value="F:rRNA binding"/>
    <property type="evidence" value="ECO:0007669"/>
    <property type="project" value="UniProtKB-UniRule"/>
</dbReference>
<dbReference type="GO" id="GO:0003735">
    <property type="term" value="F:structural constituent of ribosome"/>
    <property type="evidence" value="ECO:0007669"/>
    <property type="project" value="InterPro"/>
</dbReference>
<dbReference type="GO" id="GO:0000027">
    <property type="term" value="P:ribosomal large subunit assembly"/>
    <property type="evidence" value="ECO:0007669"/>
    <property type="project" value="UniProtKB-UniRule"/>
</dbReference>
<dbReference type="GO" id="GO:0006412">
    <property type="term" value="P:translation"/>
    <property type="evidence" value="ECO:0007669"/>
    <property type="project" value="InterPro"/>
</dbReference>
<dbReference type="CDD" id="cd07026">
    <property type="entry name" value="Ribosomal_L20"/>
    <property type="match status" value="1"/>
</dbReference>
<dbReference type="FunFam" id="1.10.1900.20:FF:000001">
    <property type="entry name" value="50S ribosomal protein L20"/>
    <property type="match status" value="1"/>
</dbReference>
<dbReference type="Gene3D" id="6.10.160.10">
    <property type="match status" value="1"/>
</dbReference>
<dbReference type="Gene3D" id="1.10.1900.20">
    <property type="entry name" value="Ribosomal protein L20"/>
    <property type="match status" value="1"/>
</dbReference>
<dbReference type="HAMAP" id="MF_00382">
    <property type="entry name" value="Ribosomal_bL20"/>
    <property type="match status" value="1"/>
</dbReference>
<dbReference type="InterPro" id="IPR005813">
    <property type="entry name" value="Ribosomal_bL20"/>
</dbReference>
<dbReference type="InterPro" id="IPR049946">
    <property type="entry name" value="RIBOSOMAL_L20_CS"/>
</dbReference>
<dbReference type="InterPro" id="IPR035566">
    <property type="entry name" value="Ribosomal_protein_bL20_C"/>
</dbReference>
<dbReference type="NCBIfam" id="TIGR01032">
    <property type="entry name" value="rplT_bact"/>
    <property type="match status" value="1"/>
</dbReference>
<dbReference type="PANTHER" id="PTHR10986">
    <property type="entry name" value="39S RIBOSOMAL PROTEIN L20"/>
    <property type="match status" value="1"/>
</dbReference>
<dbReference type="Pfam" id="PF00453">
    <property type="entry name" value="Ribosomal_L20"/>
    <property type="match status" value="1"/>
</dbReference>
<dbReference type="PRINTS" id="PR00062">
    <property type="entry name" value="RIBOSOMALL20"/>
</dbReference>
<dbReference type="SUPFAM" id="SSF74731">
    <property type="entry name" value="Ribosomal protein L20"/>
    <property type="match status" value="1"/>
</dbReference>
<dbReference type="PROSITE" id="PS00937">
    <property type="entry name" value="RIBOSOMAL_L20"/>
    <property type="match status" value="1"/>
</dbReference>
<feature type="chain" id="PRO_1000060689" description="Large ribosomal subunit protein bL20">
    <location>
        <begin position="1"/>
        <end position="118"/>
    </location>
</feature>
<comment type="function">
    <text evidence="1">Binds directly to 23S ribosomal RNA and is necessary for the in vitro assembly process of the 50S ribosomal subunit. It is not involved in the protein synthesizing functions of that subunit.</text>
</comment>
<comment type="similarity">
    <text evidence="1">Belongs to the bacterial ribosomal protein bL20 family.</text>
</comment>
<protein>
    <recommendedName>
        <fullName evidence="1">Large ribosomal subunit protein bL20</fullName>
    </recommendedName>
    <alternativeName>
        <fullName evidence="2">50S ribosomal protein L20</fullName>
    </alternativeName>
</protein>
<gene>
    <name evidence="1" type="primary">rplT</name>
    <name type="ordered locus">Ent638_1727</name>
</gene>
<sequence length="118" mass="13497">MARVKRGVVARARHKKILKQAKGYYGARSRVYRVAFQAVIKAGQYAYRDRRQRKRQFRQLWIARINAAARQNGISYSKFINGLKKASVEIDRKILADIAVFDKLAFTALVEKAKAALA</sequence>
<accession>A4W9M6</accession>
<keyword id="KW-0687">Ribonucleoprotein</keyword>
<keyword id="KW-0689">Ribosomal protein</keyword>
<keyword id="KW-0694">RNA-binding</keyword>
<keyword id="KW-0699">rRNA-binding</keyword>